<gene>
    <name evidence="1" type="primary">rplK</name>
    <name evidence="1" type="synonym">rpl11</name>
    <name type="ordered locus">SYNW2343</name>
</gene>
<proteinExistence type="inferred from homology"/>
<organism>
    <name type="scientific">Parasynechococcus marenigrum (strain WH8102)</name>
    <dbReference type="NCBI Taxonomy" id="84588"/>
    <lineage>
        <taxon>Bacteria</taxon>
        <taxon>Bacillati</taxon>
        <taxon>Cyanobacteriota</taxon>
        <taxon>Cyanophyceae</taxon>
        <taxon>Synechococcales</taxon>
        <taxon>Prochlorococcaceae</taxon>
        <taxon>Parasynechococcus</taxon>
        <taxon>Parasynechococcus marenigrum</taxon>
    </lineage>
</organism>
<comment type="function">
    <text evidence="1">Forms part of the ribosomal stalk which helps the ribosome interact with GTP-bound translation factors.</text>
</comment>
<comment type="subunit">
    <text evidence="1">Part of the ribosomal stalk of the 50S ribosomal subunit. Interacts with L10 and the large rRNA to form the base of the stalk. L10 forms an elongated spine to which L12 dimers bind in a sequential fashion forming a multimeric L10(L12)X complex.</text>
</comment>
<comment type="PTM">
    <text evidence="1">One or more lysine residues are methylated.</text>
</comment>
<comment type="similarity">
    <text evidence="1">Belongs to the universal ribosomal protein uL11 family.</text>
</comment>
<name>RL11_PARMW</name>
<evidence type="ECO:0000255" key="1">
    <source>
        <dbReference type="HAMAP-Rule" id="MF_00736"/>
    </source>
</evidence>
<evidence type="ECO:0000305" key="2"/>
<keyword id="KW-0488">Methylation</keyword>
<keyword id="KW-0687">Ribonucleoprotein</keyword>
<keyword id="KW-0689">Ribosomal protein</keyword>
<keyword id="KW-0694">RNA-binding</keyword>
<keyword id="KW-0699">rRNA-binding</keyword>
<sequence>MAKKVTAVIKLALQAGKANPAPPVGPALGQHGVNIMMFCKEYNARTQDKAGFVIPVEISVYEDRSFTFITKTPPASVLITKAAKIEKGSGESAKGNVGSINRAQLEEIAKTKLPDLNCTSVESAMRIIEGTARNMGVSISD</sequence>
<protein>
    <recommendedName>
        <fullName evidence="1">Large ribosomal subunit protein uL11</fullName>
    </recommendedName>
    <alternativeName>
        <fullName evidence="2">50S ribosomal protein L11</fullName>
    </alternativeName>
</protein>
<dbReference type="EMBL" id="BX569695">
    <property type="protein sequence ID" value="CAE08858.1"/>
    <property type="molecule type" value="Genomic_DNA"/>
</dbReference>
<dbReference type="RefSeq" id="WP_011129196.1">
    <property type="nucleotide sequence ID" value="NC_005070.1"/>
</dbReference>
<dbReference type="SMR" id="Q7U3T6"/>
<dbReference type="STRING" id="84588.SYNW2343"/>
<dbReference type="KEGG" id="syw:SYNW2343"/>
<dbReference type="eggNOG" id="COG0080">
    <property type="taxonomic scope" value="Bacteria"/>
</dbReference>
<dbReference type="HOGENOM" id="CLU_074237_2_2_3"/>
<dbReference type="Proteomes" id="UP000001422">
    <property type="component" value="Chromosome"/>
</dbReference>
<dbReference type="GO" id="GO:0022625">
    <property type="term" value="C:cytosolic large ribosomal subunit"/>
    <property type="evidence" value="ECO:0007669"/>
    <property type="project" value="TreeGrafter"/>
</dbReference>
<dbReference type="GO" id="GO:0070180">
    <property type="term" value="F:large ribosomal subunit rRNA binding"/>
    <property type="evidence" value="ECO:0007669"/>
    <property type="project" value="UniProtKB-UniRule"/>
</dbReference>
<dbReference type="GO" id="GO:0003735">
    <property type="term" value="F:structural constituent of ribosome"/>
    <property type="evidence" value="ECO:0007669"/>
    <property type="project" value="InterPro"/>
</dbReference>
<dbReference type="GO" id="GO:0006412">
    <property type="term" value="P:translation"/>
    <property type="evidence" value="ECO:0007669"/>
    <property type="project" value="UniProtKB-UniRule"/>
</dbReference>
<dbReference type="CDD" id="cd00349">
    <property type="entry name" value="Ribosomal_L11"/>
    <property type="match status" value="1"/>
</dbReference>
<dbReference type="FunFam" id="1.10.10.250:FF:000001">
    <property type="entry name" value="50S ribosomal protein L11"/>
    <property type="match status" value="1"/>
</dbReference>
<dbReference type="FunFam" id="3.30.1550.10:FF:000001">
    <property type="entry name" value="50S ribosomal protein L11"/>
    <property type="match status" value="1"/>
</dbReference>
<dbReference type="Gene3D" id="1.10.10.250">
    <property type="entry name" value="Ribosomal protein L11, C-terminal domain"/>
    <property type="match status" value="1"/>
</dbReference>
<dbReference type="Gene3D" id="3.30.1550.10">
    <property type="entry name" value="Ribosomal protein L11/L12, N-terminal domain"/>
    <property type="match status" value="1"/>
</dbReference>
<dbReference type="HAMAP" id="MF_00736">
    <property type="entry name" value="Ribosomal_uL11"/>
    <property type="match status" value="1"/>
</dbReference>
<dbReference type="InterPro" id="IPR000911">
    <property type="entry name" value="Ribosomal_uL11"/>
</dbReference>
<dbReference type="InterPro" id="IPR006519">
    <property type="entry name" value="Ribosomal_uL11_bac-typ"/>
</dbReference>
<dbReference type="InterPro" id="IPR020783">
    <property type="entry name" value="Ribosomal_uL11_C"/>
</dbReference>
<dbReference type="InterPro" id="IPR036769">
    <property type="entry name" value="Ribosomal_uL11_C_sf"/>
</dbReference>
<dbReference type="InterPro" id="IPR020785">
    <property type="entry name" value="Ribosomal_uL11_CS"/>
</dbReference>
<dbReference type="InterPro" id="IPR020784">
    <property type="entry name" value="Ribosomal_uL11_N"/>
</dbReference>
<dbReference type="InterPro" id="IPR036796">
    <property type="entry name" value="Ribosomal_uL11_N_sf"/>
</dbReference>
<dbReference type="NCBIfam" id="TIGR01632">
    <property type="entry name" value="L11_bact"/>
    <property type="match status" value="1"/>
</dbReference>
<dbReference type="PANTHER" id="PTHR11661">
    <property type="entry name" value="60S RIBOSOMAL PROTEIN L12"/>
    <property type="match status" value="1"/>
</dbReference>
<dbReference type="PANTHER" id="PTHR11661:SF1">
    <property type="entry name" value="LARGE RIBOSOMAL SUBUNIT PROTEIN UL11M"/>
    <property type="match status" value="1"/>
</dbReference>
<dbReference type="Pfam" id="PF00298">
    <property type="entry name" value="Ribosomal_L11"/>
    <property type="match status" value="1"/>
</dbReference>
<dbReference type="Pfam" id="PF03946">
    <property type="entry name" value="Ribosomal_L11_N"/>
    <property type="match status" value="1"/>
</dbReference>
<dbReference type="SMART" id="SM00649">
    <property type="entry name" value="RL11"/>
    <property type="match status" value="1"/>
</dbReference>
<dbReference type="SUPFAM" id="SSF54747">
    <property type="entry name" value="Ribosomal L11/L12e N-terminal domain"/>
    <property type="match status" value="1"/>
</dbReference>
<dbReference type="SUPFAM" id="SSF46906">
    <property type="entry name" value="Ribosomal protein L11, C-terminal domain"/>
    <property type="match status" value="1"/>
</dbReference>
<dbReference type="PROSITE" id="PS00359">
    <property type="entry name" value="RIBOSOMAL_L11"/>
    <property type="match status" value="1"/>
</dbReference>
<feature type="chain" id="PRO_0000104395" description="Large ribosomal subunit protein uL11">
    <location>
        <begin position="1"/>
        <end position="141"/>
    </location>
</feature>
<accession>Q7U3T6</accession>
<reference key="1">
    <citation type="journal article" date="2003" name="Nature">
        <title>The genome of a motile marine Synechococcus.</title>
        <authorList>
            <person name="Palenik B."/>
            <person name="Brahamsha B."/>
            <person name="Larimer F.W."/>
            <person name="Land M.L."/>
            <person name="Hauser L."/>
            <person name="Chain P."/>
            <person name="Lamerdin J.E."/>
            <person name="Regala W."/>
            <person name="Allen E.E."/>
            <person name="McCarren J."/>
            <person name="Paulsen I.T."/>
            <person name="Dufresne A."/>
            <person name="Partensky F."/>
            <person name="Webb E.A."/>
            <person name="Waterbury J."/>
        </authorList>
    </citation>
    <scope>NUCLEOTIDE SEQUENCE [LARGE SCALE GENOMIC DNA]</scope>
    <source>
        <strain>WH8102</strain>
    </source>
</reference>